<reference key="1">
    <citation type="journal article" date="2000" name="Nucleic Acids Res.">
        <title>Complete genome sequence of the alkaliphilic bacterium Bacillus halodurans and genomic sequence comparison with Bacillus subtilis.</title>
        <authorList>
            <person name="Takami H."/>
            <person name="Nakasone K."/>
            <person name="Takaki Y."/>
            <person name="Maeno G."/>
            <person name="Sasaki R."/>
            <person name="Masui N."/>
            <person name="Fuji F."/>
            <person name="Hirama C."/>
            <person name="Nakamura Y."/>
            <person name="Ogasawara N."/>
            <person name="Kuhara S."/>
            <person name="Horikoshi K."/>
        </authorList>
    </citation>
    <scope>NUCLEOTIDE SEQUENCE [LARGE SCALE GENOMIC DNA]</scope>
    <source>
        <strain>ATCC BAA-125 / DSM 18197 / FERM 7344 / JCM 9153 / C-125</strain>
    </source>
</reference>
<gene>
    <name evidence="1" type="primary">nrdR</name>
    <name type="ordered locus">BH3146</name>
</gene>
<dbReference type="EMBL" id="BA000004">
    <property type="protein sequence ID" value="BAB06865.1"/>
    <property type="molecule type" value="Genomic_DNA"/>
</dbReference>
<dbReference type="PIR" id="B84043">
    <property type="entry name" value="B84043"/>
</dbReference>
<dbReference type="RefSeq" id="WP_010899289.1">
    <property type="nucleotide sequence ID" value="NC_002570.2"/>
</dbReference>
<dbReference type="SMR" id="Q9K861"/>
<dbReference type="STRING" id="272558.gene:10729058"/>
<dbReference type="GeneID" id="87598666"/>
<dbReference type="KEGG" id="bha:BH3146"/>
<dbReference type="eggNOG" id="COG1327">
    <property type="taxonomic scope" value="Bacteria"/>
</dbReference>
<dbReference type="HOGENOM" id="CLU_108412_0_0_9"/>
<dbReference type="OrthoDB" id="9807461at2"/>
<dbReference type="Proteomes" id="UP000001258">
    <property type="component" value="Chromosome"/>
</dbReference>
<dbReference type="GO" id="GO:0005524">
    <property type="term" value="F:ATP binding"/>
    <property type="evidence" value="ECO:0007669"/>
    <property type="project" value="UniProtKB-KW"/>
</dbReference>
<dbReference type="GO" id="GO:0003677">
    <property type="term" value="F:DNA binding"/>
    <property type="evidence" value="ECO:0007669"/>
    <property type="project" value="UniProtKB-KW"/>
</dbReference>
<dbReference type="GO" id="GO:0008270">
    <property type="term" value="F:zinc ion binding"/>
    <property type="evidence" value="ECO:0007669"/>
    <property type="project" value="UniProtKB-UniRule"/>
</dbReference>
<dbReference type="GO" id="GO:0045892">
    <property type="term" value="P:negative regulation of DNA-templated transcription"/>
    <property type="evidence" value="ECO:0007669"/>
    <property type="project" value="UniProtKB-UniRule"/>
</dbReference>
<dbReference type="HAMAP" id="MF_00440">
    <property type="entry name" value="NrdR"/>
    <property type="match status" value="1"/>
</dbReference>
<dbReference type="InterPro" id="IPR005144">
    <property type="entry name" value="ATP-cone_dom"/>
</dbReference>
<dbReference type="InterPro" id="IPR055173">
    <property type="entry name" value="NrdR-like_N"/>
</dbReference>
<dbReference type="InterPro" id="IPR003796">
    <property type="entry name" value="RNR_NrdR-like"/>
</dbReference>
<dbReference type="NCBIfam" id="TIGR00244">
    <property type="entry name" value="transcriptional regulator NrdR"/>
    <property type="match status" value="1"/>
</dbReference>
<dbReference type="PANTHER" id="PTHR30455">
    <property type="entry name" value="TRANSCRIPTIONAL REPRESSOR NRDR"/>
    <property type="match status" value="1"/>
</dbReference>
<dbReference type="PANTHER" id="PTHR30455:SF2">
    <property type="entry name" value="TRANSCRIPTIONAL REPRESSOR NRDR"/>
    <property type="match status" value="1"/>
</dbReference>
<dbReference type="Pfam" id="PF03477">
    <property type="entry name" value="ATP-cone"/>
    <property type="match status" value="1"/>
</dbReference>
<dbReference type="Pfam" id="PF22811">
    <property type="entry name" value="Zn_ribbon_NrdR"/>
    <property type="match status" value="1"/>
</dbReference>
<dbReference type="PROSITE" id="PS51161">
    <property type="entry name" value="ATP_CONE"/>
    <property type="match status" value="1"/>
</dbReference>
<evidence type="ECO:0000255" key="1">
    <source>
        <dbReference type="HAMAP-Rule" id="MF_00440"/>
    </source>
</evidence>
<evidence type="ECO:0000256" key="2">
    <source>
        <dbReference type="SAM" id="MobiDB-lite"/>
    </source>
</evidence>
<feature type="chain" id="PRO_0000182264" description="Transcriptional repressor NrdR">
    <location>
        <begin position="1"/>
        <end position="153"/>
    </location>
</feature>
<feature type="domain" description="ATP-cone" evidence="1">
    <location>
        <begin position="49"/>
        <end position="139"/>
    </location>
</feature>
<feature type="zinc finger region" evidence="1">
    <location>
        <begin position="3"/>
        <end position="34"/>
    </location>
</feature>
<feature type="region of interest" description="Disordered" evidence="2">
    <location>
        <begin position="1"/>
        <end position="22"/>
    </location>
</feature>
<comment type="function">
    <text evidence="1">Negatively regulates transcription of bacterial ribonucleotide reductase nrd genes and operons by binding to NrdR-boxes.</text>
</comment>
<comment type="cofactor">
    <cofactor evidence="1">
        <name>Zn(2+)</name>
        <dbReference type="ChEBI" id="CHEBI:29105"/>
    </cofactor>
    <text evidence="1">Binds 1 zinc ion.</text>
</comment>
<comment type="similarity">
    <text evidence="1">Belongs to the NrdR family.</text>
</comment>
<accession>Q9K861</accession>
<name>NRDR_HALH5</name>
<proteinExistence type="inferred from homology"/>
<sequence length="153" mass="17915">MRCPACHHNGTRVLDSRPAHEGRSIRRRRECESCNHRFTTFEMIEEVPLIVVKKDGTRQEFSSDKILRGLIRACEKRPVPLETLEGIVNEVERELRGQGKNEVDSKEIGELVMERLANVDDVAYVRFASVYRQFKDINVFIQELKELMERDDR</sequence>
<protein>
    <recommendedName>
        <fullName evidence="1">Transcriptional repressor NrdR</fullName>
    </recommendedName>
</protein>
<keyword id="KW-0067">ATP-binding</keyword>
<keyword id="KW-0238">DNA-binding</keyword>
<keyword id="KW-0479">Metal-binding</keyword>
<keyword id="KW-0547">Nucleotide-binding</keyword>
<keyword id="KW-1185">Reference proteome</keyword>
<keyword id="KW-0678">Repressor</keyword>
<keyword id="KW-0804">Transcription</keyword>
<keyword id="KW-0805">Transcription regulation</keyword>
<keyword id="KW-0862">Zinc</keyword>
<keyword id="KW-0863">Zinc-finger</keyword>
<organism>
    <name type="scientific">Halalkalibacterium halodurans (strain ATCC BAA-125 / DSM 18197 / FERM 7344 / JCM 9153 / C-125)</name>
    <name type="common">Bacillus halodurans</name>
    <dbReference type="NCBI Taxonomy" id="272558"/>
    <lineage>
        <taxon>Bacteria</taxon>
        <taxon>Bacillati</taxon>
        <taxon>Bacillota</taxon>
        <taxon>Bacilli</taxon>
        <taxon>Bacillales</taxon>
        <taxon>Bacillaceae</taxon>
        <taxon>Halalkalibacterium (ex Joshi et al. 2022)</taxon>
    </lineage>
</organism>